<protein>
    <recommendedName>
        <fullName evidence="1">Small ribosomal subunit protein uS8</fullName>
    </recommendedName>
    <alternativeName>
        <fullName evidence="2">30S ribosomal protein S8</fullName>
    </alternativeName>
</protein>
<evidence type="ECO:0000255" key="1">
    <source>
        <dbReference type="HAMAP-Rule" id="MF_01302"/>
    </source>
</evidence>
<evidence type="ECO:0000305" key="2"/>
<name>RS8_IGNH4</name>
<proteinExistence type="inferred from homology"/>
<comment type="function">
    <text evidence="1">One of the primary rRNA binding proteins, it binds directly to 16S rRNA central domain where it helps coordinate assembly of the platform of the 30S subunit.</text>
</comment>
<comment type="subunit">
    <text evidence="1">Part of the 30S ribosomal subunit.</text>
</comment>
<comment type="similarity">
    <text evidence="1">Belongs to the universal ribosomal protein uS8 family.</text>
</comment>
<sequence>MVMLDTLANALTTIYNNEVRGNKEAIIMPASKLIANVLRIMQKEGYVGEFEYIDDGRWGKIRVRLLGRINKCGAIKPRVSVSYRDLLVLPEHLRRFLPSKDVGILIISTSQGLMTHKEAIQKRVGGIAIAYVY</sequence>
<feature type="chain" id="PRO_1000051782" description="Small ribosomal subunit protein uS8">
    <location>
        <begin position="1"/>
        <end position="133"/>
    </location>
</feature>
<gene>
    <name evidence="1" type="primary">rps8</name>
    <name type="ordered locus">Igni_1413</name>
</gene>
<dbReference type="EMBL" id="CP000816">
    <property type="protein sequence ID" value="ABU82589.1"/>
    <property type="molecule type" value="Genomic_DNA"/>
</dbReference>
<dbReference type="RefSeq" id="WP_012123553.1">
    <property type="nucleotide sequence ID" value="NC_009776.1"/>
</dbReference>
<dbReference type="SMR" id="A8ACD7"/>
<dbReference type="STRING" id="453591.Igni_1413"/>
<dbReference type="GeneID" id="5561794"/>
<dbReference type="KEGG" id="iho:Igni_1413"/>
<dbReference type="eggNOG" id="arCOG04091">
    <property type="taxonomic scope" value="Archaea"/>
</dbReference>
<dbReference type="HOGENOM" id="CLU_098428_1_1_2"/>
<dbReference type="OrthoDB" id="5670at2157"/>
<dbReference type="PhylomeDB" id="A8ACD7"/>
<dbReference type="Proteomes" id="UP000000262">
    <property type="component" value="Chromosome"/>
</dbReference>
<dbReference type="GO" id="GO:1990904">
    <property type="term" value="C:ribonucleoprotein complex"/>
    <property type="evidence" value="ECO:0007669"/>
    <property type="project" value="UniProtKB-KW"/>
</dbReference>
<dbReference type="GO" id="GO:0005840">
    <property type="term" value="C:ribosome"/>
    <property type="evidence" value="ECO:0007669"/>
    <property type="project" value="UniProtKB-KW"/>
</dbReference>
<dbReference type="GO" id="GO:0019843">
    <property type="term" value="F:rRNA binding"/>
    <property type="evidence" value="ECO:0007669"/>
    <property type="project" value="UniProtKB-UniRule"/>
</dbReference>
<dbReference type="GO" id="GO:0003735">
    <property type="term" value="F:structural constituent of ribosome"/>
    <property type="evidence" value="ECO:0007669"/>
    <property type="project" value="InterPro"/>
</dbReference>
<dbReference type="GO" id="GO:0006412">
    <property type="term" value="P:translation"/>
    <property type="evidence" value="ECO:0007669"/>
    <property type="project" value="UniProtKB-UniRule"/>
</dbReference>
<dbReference type="FunFam" id="3.30.1370.30:FF:000001">
    <property type="entry name" value="40S ribosomal protein S15a"/>
    <property type="match status" value="1"/>
</dbReference>
<dbReference type="Gene3D" id="3.30.1370.30">
    <property type="match status" value="1"/>
</dbReference>
<dbReference type="Gene3D" id="3.30.1490.10">
    <property type="match status" value="1"/>
</dbReference>
<dbReference type="HAMAP" id="MF_01302_A">
    <property type="entry name" value="Ribosomal_uS8_A"/>
    <property type="match status" value="1"/>
</dbReference>
<dbReference type="InterPro" id="IPR000630">
    <property type="entry name" value="Ribosomal_uS8"/>
</dbReference>
<dbReference type="InterPro" id="IPR047863">
    <property type="entry name" value="Ribosomal_uS8_CS"/>
</dbReference>
<dbReference type="InterPro" id="IPR035987">
    <property type="entry name" value="Ribosomal_uS8_sf"/>
</dbReference>
<dbReference type="NCBIfam" id="NF003115">
    <property type="entry name" value="PRK04034.1"/>
    <property type="match status" value="1"/>
</dbReference>
<dbReference type="PANTHER" id="PTHR11758">
    <property type="entry name" value="40S RIBOSOMAL PROTEIN S15A"/>
    <property type="match status" value="1"/>
</dbReference>
<dbReference type="Pfam" id="PF00410">
    <property type="entry name" value="Ribosomal_S8"/>
    <property type="match status" value="1"/>
</dbReference>
<dbReference type="SUPFAM" id="SSF56047">
    <property type="entry name" value="Ribosomal protein S8"/>
    <property type="match status" value="1"/>
</dbReference>
<dbReference type="PROSITE" id="PS00053">
    <property type="entry name" value="RIBOSOMAL_S8"/>
    <property type="match status" value="1"/>
</dbReference>
<organism>
    <name type="scientific">Ignicoccus hospitalis (strain KIN4/I / DSM 18386 / JCM 14125)</name>
    <dbReference type="NCBI Taxonomy" id="453591"/>
    <lineage>
        <taxon>Archaea</taxon>
        <taxon>Thermoproteota</taxon>
        <taxon>Thermoprotei</taxon>
        <taxon>Desulfurococcales</taxon>
        <taxon>Desulfurococcaceae</taxon>
        <taxon>Ignicoccus</taxon>
    </lineage>
</organism>
<accession>A8ACD7</accession>
<keyword id="KW-1185">Reference proteome</keyword>
<keyword id="KW-0687">Ribonucleoprotein</keyword>
<keyword id="KW-0689">Ribosomal protein</keyword>
<keyword id="KW-0694">RNA-binding</keyword>
<keyword id="KW-0699">rRNA-binding</keyword>
<reference key="1">
    <citation type="journal article" date="2008" name="Genome Biol.">
        <title>A genomic analysis of the archaeal system Ignicoccus hospitalis-Nanoarchaeum equitans.</title>
        <authorList>
            <person name="Podar M."/>
            <person name="Anderson I."/>
            <person name="Makarova K.S."/>
            <person name="Elkins J.G."/>
            <person name="Ivanova N."/>
            <person name="Wall M.A."/>
            <person name="Lykidis A."/>
            <person name="Mavromatis K."/>
            <person name="Sun H."/>
            <person name="Hudson M.E."/>
            <person name="Chen W."/>
            <person name="Deciu C."/>
            <person name="Hutchison D."/>
            <person name="Eads J.R."/>
            <person name="Anderson A."/>
            <person name="Fernandes F."/>
            <person name="Szeto E."/>
            <person name="Lapidus A."/>
            <person name="Kyrpides N.C."/>
            <person name="Saier M.H. Jr."/>
            <person name="Richardson P.M."/>
            <person name="Rachel R."/>
            <person name="Huber H."/>
            <person name="Eisen J.A."/>
            <person name="Koonin E.V."/>
            <person name="Keller M."/>
            <person name="Stetter K.O."/>
        </authorList>
    </citation>
    <scope>NUCLEOTIDE SEQUENCE [LARGE SCALE GENOMIC DNA]</scope>
    <source>
        <strain>KIN4/I / DSM 18386 / JCM 14125</strain>
    </source>
</reference>